<comment type="function">
    <text evidence="1">Forms part of the ribosomal stalk which helps the ribosome interact with GTP-bound translation factors. Is thus essential for accurate translation.</text>
</comment>
<comment type="subunit">
    <text evidence="1">Homodimer. Part of the ribosomal stalk of the 50S ribosomal subunit. Forms a multimeric L10(L12)X complex, where L10 forms an elongated spine to which 2 to 4 L12 dimers bind in a sequential fashion. Binds GTP-bound translation factors.</text>
</comment>
<comment type="similarity">
    <text evidence="1">Belongs to the bacterial ribosomal protein bL12 family.</text>
</comment>
<protein>
    <recommendedName>
        <fullName evidence="1">Large ribosomal subunit protein bL12</fullName>
    </recommendedName>
    <alternativeName>
        <fullName evidence="2">50S ribosomal protein L7/L12</fullName>
    </alternativeName>
</protein>
<accession>C3PKM8</accession>
<sequence length="128" mass="13273">MAKLTKDELIEAFKEMTLIELSEFVKEFEEVFDVEAAAPVAAVAAGAPAAGGAAEEEKTEFDVVLTDAGAKKIGVIKAVREIVSGLGLKEAKELVEGAPKAILEGASKDDAEAAKAKLEEAGASVELK</sequence>
<organism>
    <name type="scientific">Corynebacterium aurimucosum (strain ATCC 700975 / DSM 44827 / CIP 107346 / CN-1)</name>
    <name type="common">Corynebacterium nigricans</name>
    <dbReference type="NCBI Taxonomy" id="548476"/>
    <lineage>
        <taxon>Bacteria</taxon>
        <taxon>Bacillati</taxon>
        <taxon>Actinomycetota</taxon>
        <taxon>Actinomycetes</taxon>
        <taxon>Mycobacteriales</taxon>
        <taxon>Corynebacteriaceae</taxon>
        <taxon>Corynebacterium</taxon>
    </lineage>
</organism>
<keyword id="KW-1185">Reference proteome</keyword>
<keyword id="KW-0687">Ribonucleoprotein</keyword>
<keyword id="KW-0689">Ribosomal protein</keyword>
<proteinExistence type="inferred from homology"/>
<evidence type="ECO:0000255" key="1">
    <source>
        <dbReference type="HAMAP-Rule" id="MF_00368"/>
    </source>
</evidence>
<evidence type="ECO:0000305" key="2"/>
<gene>
    <name evidence="1" type="primary">rplL</name>
    <name type="ordered locus">cauri_0365</name>
</gene>
<reference key="1">
    <citation type="journal article" date="2010" name="BMC Genomics">
        <title>Complete genome sequence and lifestyle of black-pigmented Corynebacterium aurimucosum ATCC 700975 (formerly C. nigricans CN-1) isolated from a vaginal swab of a woman with spontaneous abortion.</title>
        <authorList>
            <person name="Trost E."/>
            <person name="Gotker S."/>
            <person name="Schneider J."/>
            <person name="Schneiker-Bekel S."/>
            <person name="Szczepanowski R."/>
            <person name="Tilker A."/>
            <person name="Viehoever P."/>
            <person name="Arnold W."/>
            <person name="Bekel T."/>
            <person name="Blom J."/>
            <person name="Gartemann K.H."/>
            <person name="Linke B."/>
            <person name="Goesmann A."/>
            <person name="Puhler A."/>
            <person name="Shukla S.K."/>
            <person name="Tauch A."/>
        </authorList>
    </citation>
    <scope>NUCLEOTIDE SEQUENCE [LARGE SCALE GENOMIC DNA]</scope>
    <source>
        <strain>ATCC 700975 / DSM 44827 / CIP 107346 / CN-1</strain>
    </source>
</reference>
<feature type="chain" id="PRO_1000195786" description="Large ribosomal subunit protein bL12">
    <location>
        <begin position="1"/>
        <end position="128"/>
    </location>
</feature>
<name>RL7_CORA7</name>
<dbReference type="EMBL" id="CP001601">
    <property type="protein sequence ID" value="ACP31964.1"/>
    <property type="molecule type" value="Genomic_DNA"/>
</dbReference>
<dbReference type="RefSeq" id="WP_010189710.1">
    <property type="nucleotide sequence ID" value="NZ_ACLH01000069.1"/>
</dbReference>
<dbReference type="SMR" id="C3PKM8"/>
<dbReference type="STRING" id="548476.cauri_0365"/>
<dbReference type="GeneID" id="31922985"/>
<dbReference type="KEGG" id="car:cauri_0365"/>
<dbReference type="eggNOG" id="COG0222">
    <property type="taxonomic scope" value="Bacteria"/>
</dbReference>
<dbReference type="HOGENOM" id="CLU_086499_3_0_11"/>
<dbReference type="OrthoDB" id="9811748at2"/>
<dbReference type="Proteomes" id="UP000002077">
    <property type="component" value="Chromosome"/>
</dbReference>
<dbReference type="GO" id="GO:0022625">
    <property type="term" value="C:cytosolic large ribosomal subunit"/>
    <property type="evidence" value="ECO:0007669"/>
    <property type="project" value="TreeGrafter"/>
</dbReference>
<dbReference type="GO" id="GO:0003729">
    <property type="term" value="F:mRNA binding"/>
    <property type="evidence" value="ECO:0007669"/>
    <property type="project" value="TreeGrafter"/>
</dbReference>
<dbReference type="GO" id="GO:0003735">
    <property type="term" value="F:structural constituent of ribosome"/>
    <property type="evidence" value="ECO:0007669"/>
    <property type="project" value="InterPro"/>
</dbReference>
<dbReference type="GO" id="GO:0006412">
    <property type="term" value="P:translation"/>
    <property type="evidence" value="ECO:0007669"/>
    <property type="project" value="UniProtKB-UniRule"/>
</dbReference>
<dbReference type="CDD" id="cd00387">
    <property type="entry name" value="Ribosomal_L7_L12"/>
    <property type="match status" value="1"/>
</dbReference>
<dbReference type="FunFam" id="3.30.1390.10:FF:000001">
    <property type="entry name" value="50S ribosomal protein L7/L12"/>
    <property type="match status" value="1"/>
</dbReference>
<dbReference type="Gene3D" id="3.30.1390.10">
    <property type="match status" value="1"/>
</dbReference>
<dbReference type="Gene3D" id="1.20.5.710">
    <property type="entry name" value="Single helix bin"/>
    <property type="match status" value="1"/>
</dbReference>
<dbReference type="HAMAP" id="MF_00368">
    <property type="entry name" value="Ribosomal_bL12"/>
    <property type="match status" value="1"/>
</dbReference>
<dbReference type="InterPro" id="IPR000206">
    <property type="entry name" value="Ribosomal_bL12"/>
</dbReference>
<dbReference type="InterPro" id="IPR013823">
    <property type="entry name" value="Ribosomal_bL12_C"/>
</dbReference>
<dbReference type="InterPro" id="IPR014719">
    <property type="entry name" value="Ribosomal_bL12_C/ClpS-like"/>
</dbReference>
<dbReference type="InterPro" id="IPR008932">
    <property type="entry name" value="Ribosomal_bL12_oligo"/>
</dbReference>
<dbReference type="InterPro" id="IPR036235">
    <property type="entry name" value="Ribosomal_bL12_oligo_N_sf"/>
</dbReference>
<dbReference type="NCBIfam" id="TIGR00855">
    <property type="entry name" value="L12"/>
    <property type="match status" value="1"/>
</dbReference>
<dbReference type="PANTHER" id="PTHR45987">
    <property type="entry name" value="39S RIBOSOMAL PROTEIN L12"/>
    <property type="match status" value="1"/>
</dbReference>
<dbReference type="PANTHER" id="PTHR45987:SF4">
    <property type="entry name" value="LARGE RIBOSOMAL SUBUNIT PROTEIN BL12M"/>
    <property type="match status" value="1"/>
</dbReference>
<dbReference type="Pfam" id="PF00542">
    <property type="entry name" value="Ribosomal_L12"/>
    <property type="match status" value="1"/>
</dbReference>
<dbReference type="Pfam" id="PF16320">
    <property type="entry name" value="Ribosomal_L12_N"/>
    <property type="match status" value="1"/>
</dbReference>
<dbReference type="SUPFAM" id="SSF54736">
    <property type="entry name" value="ClpS-like"/>
    <property type="match status" value="1"/>
</dbReference>
<dbReference type="SUPFAM" id="SSF48300">
    <property type="entry name" value="Ribosomal protein L7/12, oligomerisation (N-terminal) domain"/>
    <property type="match status" value="1"/>
</dbReference>